<organism>
    <name type="scientific">Arabidopsis thaliana</name>
    <name type="common">Mouse-ear cress</name>
    <dbReference type="NCBI Taxonomy" id="3702"/>
    <lineage>
        <taxon>Eukaryota</taxon>
        <taxon>Viridiplantae</taxon>
        <taxon>Streptophyta</taxon>
        <taxon>Embryophyta</taxon>
        <taxon>Tracheophyta</taxon>
        <taxon>Spermatophyta</taxon>
        <taxon>Magnoliopsida</taxon>
        <taxon>eudicotyledons</taxon>
        <taxon>Gunneridae</taxon>
        <taxon>Pentapetalae</taxon>
        <taxon>rosids</taxon>
        <taxon>malvids</taxon>
        <taxon>Brassicales</taxon>
        <taxon>Brassicaceae</taxon>
        <taxon>Camelineae</taxon>
        <taxon>Arabidopsis</taxon>
    </lineage>
</organism>
<protein>
    <recommendedName>
        <fullName evidence="5">Structural maintenance of chromosomes flexible hinge domain-containing protein GMI1</fullName>
        <shortName evidence="5">SMC hinge domain-containing protein GMI1</shortName>
    </recommendedName>
    <alternativeName>
        <fullName evidence="4">Protein GAMMA-IRRADIATION AND MITOMYCIN C INDUCED 1</fullName>
    </alternativeName>
</protein>
<keyword id="KW-0175">Coiled coil</keyword>
<keyword id="KW-0227">DNA damage</keyword>
<keyword id="KW-0234">DNA repair</keyword>
<keyword id="KW-0539">Nucleus</keyword>
<keyword id="KW-1185">Reference proteome</keyword>
<evidence type="ECO:0000255" key="1"/>
<evidence type="ECO:0000256" key="2">
    <source>
        <dbReference type="SAM" id="MobiDB-lite"/>
    </source>
</evidence>
<evidence type="ECO:0000269" key="3">
    <source>
    </source>
</evidence>
<evidence type="ECO:0000303" key="4">
    <source>
    </source>
</evidence>
<evidence type="ECO:0000305" key="5"/>
<evidence type="ECO:0000312" key="6">
    <source>
        <dbReference type="Araport" id="AT5G24280"/>
    </source>
</evidence>
<evidence type="ECO:0000312" key="7">
    <source>
        <dbReference type="EMBL" id="BAB10394.1"/>
    </source>
</evidence>
<accession>F4KFS5</accession>
<accession>Q9FNF4</accession>
<proteinExistence type="evidence at transcript level"/>
<dbReference type="EMBL" id="AB006701">
    <property type="protein sequence ID" value="BAB10394.1"/>
    <property type="status" value="ALT_SEQ"/>
    <property type="molecule type" value="Genomic_DNA"/>
</dbReference>
<dbReference type="EMBL" id="CP002688">
    <property type="protein sequence ID" value="AED93279.1"/>
    <property type="molecule type" value="Genomic_DNA"/>
</dbReference>
<dbReference type="RefSeq" id="NP_197816.3">
    <property type="nucleotide sequence ID" value="NM_122334.3"/>
</dbReference>
<dbReference type="SMR" id="F4KFS5"/>
<dbReference type="FunCoup" id="F4KFS5">
    <property type="interactions" value="69"/>
</dbReference>
<dbReference type="STRING" id="3702.F4KFS5"/>
<dbReference type="GlyGen" id="F4KFS5">
    <property type="glycosylation" value="2 sites"/>
</dbReference>
<dbReference type="PaxDb" id="3702-AT5G24280.1"/>
<dbReference type="ProteomicsDB" id="248435"/>
<dbReference type="EnsemblPlants" id="AT5G24280.1">
    <property type="protein sequence ID" value="AT5G24280.1"/>
    <property type="gene ID" value="AT5G24280"/>
</dbReference>
<dbReference type="GeneID" id="832495"/>
<dbReference type="Gramene" id="AT5G24280.1">
    <property type="protein sequence ID" value="AT5G24280.1"/>
    <property type="gene ID" value="AT5G24280"/>
</dbReference>
<dbReference type="KEGG" id="ath:AT5G24280"/>
<dbReference type="Araport" id="AT5G24280"/>
<dbReference type="TAIR" id="AT5G24280">
    <property type="gene designation" value="GMI1"/>
</dbReference>
<dbReference type="eggNOG" id="ENOG502QQS5">
    <property type="taxonomic scope" value="Eukaryota"/>
</dbReference>
<dbReference type="HOGENOM" id="CLU_003046_0_0_1"/>
<dbReference type="InParanoid" id="F4KFS5"/>
<dbReference type="CD-CODE" id="4299E36E">
    <property type="entry name" value="Nucleolus"/>
</dbReference>
<dbReference type="PRO" id="PR:F4KFS5"/>
<dbReference type="Proteomes" id="UP000006548">
    <property type="component" value="Chromosome 5"/>
</dbReference>
<dbReference type="ExpressionAtlas" id="F4KFS5">
    <property type="expression patterns" value="baseline and differential"/>
</dbReference>
<dbReference type="GO" id="GO:0005634">
    <property type="term" value="C:nucleus"/>
    <property type="evidence" value="ECO:0007669"/>
    <property type="project" value="UniProtKB-SubCell"/>
</dbReference>
<dbReference type="GO" id="GO:0000724">
    <property type="term" value="P:double-strand break repair via homologous recombination"/>
    <property type="evidence" value="ECO:0000315"/>
    <property type="project" value="TAIR"/>
</dbReference>
<dbReference type="InterPro" id="IPR036890">
    <property type="entry name" value="HATPase_C_sf"/>
</dbReference>
<dbReference type="PANTHER" id="PTHR33566">
    <property type="entry name" value="EN/SPM-LIKE TRANSPOSON-RELATED"/>
    <property type="match status" value="1"/>
</dbReference>
<dbReference type="PANTHER" id="PTHR33566:SF1">
    <property type="entry name" value="EN_SPM-LIKE TRANSPOSON-RELATED"/>
    <property type="match status" value="1"/>
</dbReference>
<dbReference type="SUPFAM" id="SSF55874">
    <property type="entry name" value="ATPase domain of HSP90 chaperone/DNA topoisomerase II/histidine kinase"/>
    <property type="match status" value="1"/>
</dbReference>
<feature type="chain" id="PRO_0000443824" description="Structural maintenance of chromosomes flexible hinge domain-containing protein GMI1">
    <location>
        <begin position="1"/>
        <end position="1598"/>
    </location>
</feature>
<feature type="region of interest" description="Disordered" evidence="2">
    <location>
        <begin position="1191"/>
        <end position="1218"/>
    </location>
</feature>
<feature type="coiled-coil region" evidence="1">
    <location>
        <begin position="1258"/>
        <end position="1301"/>
    </location>
</feature>
<feature type="coiled-coil region" evidence="1">
    <location>
        <begin position="1565"/>
        <end position="1595"/>
    </location>
</feature>
<sequence length="1598" mass="179125">MSSRRSVKRSLVLDDDDDEDIFYNFKVLLPNGTSVKLTLKNPEPEISMQSFVNLVKKEYDNARKDCLLMSKRMKVDWNSGGKFHLESNGGKMKGIVRFAAFKPDLCHIIRLDDGSGIASTMYENLWDLTPDTDLLKELPENYSFETALADLIDNSLQAVWPYREGARKLISVDISGDHITVFDTGRGMDSSEGNSIDKWGKIGASLHRSQKTGAIGGNPPYLKPYFGMFGYGGPYASMFLGRCDFSFCLPILICIVLLRLTLFSVRRTLVSSKTKESKKVFTLQFKKEALIDNRSIVGKNWKTDGGMRDPSEEEMKLSPHGSFTKVEIFESEFDISKIYQLQCRLKDIYFPYIQFCLATIFLCDELSKTGRTERPVAFQVNGEDLAEIAGGEVAITNLHSKGQFFSFQIRFTLFGGKRKGTAQEANARLKFVYFPIVQGKESIEKILQSLEEEGCKVSESFQTFGRVSLRRLGRLLPEVRWDSIPFMQRGNRASTLQKSCRRVKCFVDLDAGFSPTPSKTDLASQNPFSVALRNFGSKSTEKEKDDDVNIVIHREGKSVSYAHLEEKYQEWVLEMHNTHDEEAASGLDEAVLIVGSLDKKALGILRDAVRVHKEVRRKEKTWKRGQNIKILRGAYAGIHNNNVYATIDYFLIEGFEDEAGGDTRILCRPIDRPENEGCKLSIIDGISKLEVQSSLSLPITIIDSGKCLPVDANEWNRKLDKQQEKAPSKIDLLDERDCRELKIDGELPIGNSVRAGKAPPKQIVAVVRPACFTSLTPSKKLDQKNIVKMDGEEMVMVVKLKSSDKNISSQRLFPTSRKGISGLYIFSLGSKFPNLFKKAGTYNFSFSIGNSIKCNKTVVVRPSSKAARWELDDNLESLPCNVRVGSSLPPFRIACFDKYKNKIPFTSVPSLEVELEASPGFLIKIDKLETNLINDGLILKIENMLVETDELDQIRPNYEATLEIRAMDNPFSVSVPCKVNPGPLKRVAVNNPKALENLLPDSTVEDFILELFDGYNNHVAEGTDVLIHIDGYRIEDWMGINRKVDSRGCINLSGILKVTEGYGKSVSLSVMSGNEVIFCKESQIDERQLRLVTELPDCCTAGTNLMNLIFQVTELDGSLDTSIHHDEKSGCFHTMSIESDSSSVESAIRYAFVHGSCKVSSLSLPENEGVFSCRVFHSRYPELQMSIKIQVTSAPTSEREESGYSTPHSKTTPPPESGIPSITNPWPTPCSQFGVLAIRSSSLALSSETSLMDMAQYTEDLKEKINIDEERRVELEERLKCLQAQREHAEQECSRLQASLEPLGAPFPECLSTKESMMKQIEEKHHDTAASVFCCLYRKAPPPRSLFLSQKGMFGVVALLGSVASTSLSRVLSEYLGKDTMLSLVCKSSQFGPKSDEYRKFQSEAASLGRSITNRFLVICLDATRPWRNGLVRNDPQKRLAMDNPYLPNGDPIPGFKGYAVNMIDLASEELDIQSSSGYGLRETLFYGVFRELQVYETAEHLEAALPHINGGDAVSLDGVIARENGFIYSGCCTPEVHFPITVTERQEKALVQLEITRDKKRKTEEMMTEENRSLRRLVKKLKKANEKYQNFTAMADS</sequence>
<name>GMI1_ARATH</name>
<reference key="1">
    <citation type="journal article" date="1997" name="DNA Res.">
        <title>Structural analysis of Arabidopsis thaliana chromosome 5. II. Sequence features of the regions of 1,044,062 bp covered by thirteen physically assigned P1 clones.</title>
        <authorList>
            <person name="Kotani H."/>
            <person name="Nakamura Y."/>
            <person name="Sato S."/>
            <person name="Kaneko T."/>
            <person name="Asamizu E."/>
            <person name="Miyajima N."/>
            <person name="Tabata S."/>
        </authorList>
    </citation>
    <scope>NUCLEOTIDE SEQUENCE [LARGE SCALE GENOMIC DNA]</scope>
    <source>
        <strain>cv. Columbia</strain>
    </source>
</reference>
<reference key="2">
    <citation type="journal article" date="2017" name="Plant J.">
        <title>Araport11: a complete reannotation of the Arabidopsis thaliana reference genome.</title>
        <authorList>
            <person name="Cheng C.Y."/>
            <person name="Krishnakumar V."/>
            <person name="Chan A.P."/>
            <person name="Thibaud-Nissen F."/>
            <person name="Schobel S."/>
            <person name="Town C.D."/>
        </authorList>
    </citation>
    <scope>GENOME REANNOTATION</scope>
    <source>
        <strain>cv. Columbia</strain>
    </source>
</reference>
<reference key="3">
    <citation type="journal article" date="2011" name="Plant J.">
        <title>GMI1, a structural-maintenance-of-chromosomes-hinge domain-containing protein, is involved in somatic homologous recombination in Arabidopsis.</title>
        <authorList>
            <person name="Boehmdorfer G."/>
            <person name="Schleiffer A."/>
            <person name="Brunmeir R."/>
            <person name="Ferscha S."/>
            <person name="Nizhynska V."/>
            <person name="Kozak J."/>
            <person name="Angelis K.J."/>
            <person name="Kreil D.P."/>
            <person name="Schweizer D."/>
        </authorList>
    </citation>
    <scope>FUNCTION</scope>
    <scope>TISSUE SPECIFICITY</scope>
    <scope>INDUCTION</scope>
    <scope>DISRUPTION PHENOTYPE</scope>
</reference>
<comment type="function">
    <text evidence="3">Contributes to DNA double-strand break (DSB) repair via somatic homologous recombination. Functions downstream of ATM.</text>
</comment>
<comment type="subcellular location">
    <subcellularLocation>
        <location evidence="5">Nucleus</location>
    </subcellularLocation>
</comment>
<comment type="tissue specificity">
    <text evidence="3">Highly expressed in closed buds and open flowers. Expressed at low levels in roots, stems, cauline leaves and siliques. Expressed in the region of the shoot and floral meristems.</text>
</comment>
<comment type="induction">
    <text evidence="3">Induced by mitomycin C, bleocin and gamma-irradiation.</text>
</comment>
<comment type="disruption phenotype">
    <text evidence="3">No visible phenotype under normal growth conditions, but mutant seedlings exhibit drastic reduction of somatic homologous recombination rate after treatment with bleocin or mitomycin C.</text>
</comment>
<comment type="sequence caution" evidence="5">
    <conflict type="erroneous gene model prediction">
        <sequence resource="EMBL-CDS" id="BAB10394"/>
    </conflict>
</comment>
<gene>
    <name evidence="4" type="primary">GMI1</name>
    <name evidence="6" type="ordered locus">At5g24280</name>
    <name evidence="7" type="ORF">MOP9.10</name>
</gene>